<feature type="signal peptide" evidence="2">
    <location>
        <begin position="1"/>
        <end position="19"/>
    </location>
</feature>
<feature type="chain" id="PRO_0000006794" description="Defensin-7">
    <location>
        <begin position="20"/>
        <end position="94"/>
    </location>
</feature>
<feature type="disulfide bond" evidence="1">
    <location>
        <begin position="65"/>
        <end position="93"/>
    </location>
</feature>
<feature type="disulfide bond" evidence="1">
    <location>
        <begin position="72"/>
        <end position="92"/>
    </location>
</feature>
<sequence length="94" mass="10363">MRTLTLLSAFLLVALQAWAEPLQARADEMPAQKQPPADDQDVVIYFSGDDSSSLQVPGSTKGLICHCRVLYCLFGEHLGGTSFIHGERYPICCY</sequence>
<accession>Q5G859</accession>
<keyword id="KW-0044">Antibiotic</keyword>
<keyword id="KW-0929">Antimicrobial</keyword>
<keyword id="KW-0211">Defensin</keyword>
<keyword id="KW-1015">Disulfide bond</keyword>
<keyword id="KW-0295">Fungicide</keyword>
<keyword id="KW-1185">Reference proteome</keyword>
<keyword id="KW-0964">Secreted</keyword>
<keyword id="KW-0732">Signal</keyword>
<comment type="function">
    <text evidence="1">Has antimicrobial activity.</text>
</comment>
<comment type="subcellular location">
    <subcellularLocation>
        <location>Secreted</location>
    </subcellularLocation>
</comment>
<comment type="miscellaneous">
    <text>The human orthologous protein seems not to exist, its coding region does not have a start codon.</text>
</comment>
<comment type="similarity">
    <text evidence="3">Belongs to the alpha-defensin family.</text>
</comment>
<dbReference type="EMBL" id="AY746441">
    <property type="protein sequence ID" value="AAW78344.1"/>
    <property type="molecule type" value="mRNA"/>
</dbReference>
<dbReference type="RefSeq" id="NP_001029077.3">
    <property type="nucleotide sequence ID" value="NM_001033905.3"/>
</dbReference>
<dbReference type="PaxDb" id="9598-ENSPTRP00000053246"/>
<dbReference type="GeneID" id="619353"/>
<dbReference type="KEGG" id="ptr:619353"/>
<dbReference type="CTD" id="13241"/>
<dbReference type="eggNOG" id="ENOG502T2EX">
    <property type="taxonomic scope" value="Eukaryota"/>
</dbReference>
<dbReference type="InParanoid" id="Q5G859"/>
<dbReference type="Proteomes" id="UP000002277">
    <property type="component" value="Unplaced"/>
</dbReference>
<dbReference type="GO" id="GO:0005615">
    <property type="term" value="C:extracellular space"/>
    <property type="evidence" value="ECO:0000318"/>
    <property type="project" value="GO_Central"/>
</dbReference>
<dbReference type="GO" id="GO:0019731">
    <property type="term" value="P:antibacterial humoral response"/>
    <property type="evidence" value="ECO:0000318"/>
    <property type="project" value="GO_Central"/>
</dbReference>
<dbReference type="GO" id="GO:0061844">
    <property type="term" value="P:antimicrobial humoral immune response mediated by antimicrobial peptide"/>
    <property type="evidence" value="ECO:0000318"/>
    <property type="project" value="GO_Central"/>
</dbReference>
<dbReference type="GO" id="GO:0071222">
    <property type="term" value="P:cellular response to lipopolysaccharide"/>
    <property type="evidence" value="ECO:0000318"/>
    <property type="project" value="GO_Central"/>
</dbReference>
<dbReference type="GO" id="GO:0050832">
    <property type="term" value="P:defense response to fungus"/>
    <property type="evidence" value="ECO:0007669"/>
    <property type="project" value="UniProtKB-KW"/>
</dbReference>
<dbReference type="GO" id="GO:0050829">
    <property type="term" value="P:defense response to Gram-negative bacterium"/>
    <property type="evidence" value="ECO:0000318"/>
    <property type="project" value="GO_Central"/>
</dbReference>
<dbReference type="GO" id="GO:0050830">
    <property type="term" value="P:defense response to Gram-positive bacterium"/>
    <property type="evidence" value="ECO:0000318"/>
    <property type="project" value="GO_Central"/>
</dbReference>
<dbReference type="GO" id="GO:0051673">
    <property type="term" value="P:disruption of plasma membrane integrity in another organism"/>
    <property type="evidence" value="ECO:0000318"/>
    <property type="project" value="GO_Central"/>
</dbReference>
<dbReference type="GO" id="GO:0002227">
    <property type="term" value="P:innate immune response in mucosa"/>
    <property type="evidence" value="ECO:0000318"/>
    <property type="project" value="GO_Central"/>
</dbReference>
<dbReference type="GO" id="GO:0031640">
    <property type="term" value="P:killing of cells of another organism"/>
    <property type="evidence" value="ECO:0007669"/>
    <property type="project" value="UniProtKB-KW"/>
</dbReference>
<dbReference type="InterPro" id="IPR016327">
    <property type="entry name" value="Alpha-defensin"/>
</dbReference>
<dbReference type="InterPro" id="IPR006081">
    <property type="entry name" value="Alpha-defensin_C"/>
</dbReference>
<dbReference type="InterPro" id="IPR002366">
    <property type="entry name" value="Alpha-defensin_N"/>
</dbReference>
<dbReference type="PANTHER" id="PTHR11876">
    <property type="entry name" value="ALPHA-DEFENSIN 1"/>
    <property type="match status" value="1"/>
</dbReference>
<dbReference type="PANTHER" id="PTHR11876:SF33">
    <property type="entry name" value="DEFENSIN-7"/>
    <property type="match status" value="1"/>
</dbReference>
<dbReference type="Pfam" id="PF00323">
    <property type="entry name" value="Defensin_1"/>
    <property type="match status" value="1"/>
</dbReference>
<dbReference type="Pfam" id="PF00879">
    <property type="entry name" value="Defensin_propep"/>
    <property type="match status" value="1"/>
</dbReference>
<dbReference type="PIRSF" id="PIRSF001875">
    <property type="entry name" value="Alpha-defensin"/>
    <property type="match status" value="1"/>
</dbReference>
<dbReference type="SMART" id="SM01418">
    <property type="entry name" value="Defensin_propep"/>
    <property type="match status" value="1"/>
</dbReference>
<dbReference type="SUPFAM" id="SSF57392">
    <property type="entry name" value="Defensin-like"/>
    <property type="match status" value="1"/>
</dbReference>
<proteinExistence type="inferred from homology"/>
<protein>
    <recommendedName>
        <fullName>Defensin-7</fullName>
    </recommendedName>
    <alternativeName>
        <fullName>Defensin, alpha 7</fullName>
    </alternativeName>
</protein>
<evidence type="ECO:0000250" key="1"/>
<evidence type="ECO:0000255" key="2"/>
<evidence type="ECO:0000305" key="3"/>
<reference key="1">
    <citation type="journal article" date="2004" name="Physiol. Genomics">
        <title>Rapid evolution and diversification of mammalian alpha-defensins as revealed by comparative analysis of rodent and primate genes.</title>
        <authorList>
            <person name="Patil A."/>
            <person name="Hughes A.L."/>
            <person name="Zhang G."/>
        </authorList>
    </citation>
    <scope>NUCLEOTIDE SEQUENCE [MRNA]</scope>
</reference>
<gene>
    <name type="primary">DEFA7</name>
</gene>
<name>DEF7_PANTR</name>
<organism>
    <name type="scientific">Pan troglodytes</name>
    <name type="common">Chimpanzee</name>
    <dbReference type="NCBI Taxonomy" id="9598"/>
    <lineage>
        <taxon>Eukaryota</taxon>
        <taxon>Metazoa</taxon>
        <taxon>Chordata</taxon>
        <taxon>Craniata</taxon>
        <taxon>Vertebrata</taxon>
        <taxon>Euteleostomi</taxon>
        <taxon>Mammalia</taxon>
        <taxon>Eutheria</taxon>
        <taxon>Euarchontoglires</taxon>
        <taxon>Primates</taxon>
        <taxon>Haplorrhini</taxon>
        <taxon>Catarrhini</taxon>
        <taxon>Hominidae</taxon>
        <taxon>Pan</taxon>
    </lineage>
</organism>